<protein>
    <recommendedName>
        <fullName evidence="1">D-tagatose-1,6-bisphosphate aldolase subunit KbaZ</fullName>
    </recommendedName>
</protein>
<dbReference type="EMBL" id="AE005674">
    <property type="protein sequence ID" value="AAN44636.1"/>
    <property type="molecule type" value="Genomic_DNA"/>
</dbReference>
<dbReference type="EMBL" id="AE014073">
    <property type="protein sequence ID" value="AAP18451.1"/>
    <property type="molecule type" value="Genomic_DNA"/>
</dbReference>
<dbReference type="RefSeq" id="NP_708929.1">
    <property type="nucleotide sequence ID" value="NC_004337.2"/>
</dbReference>
<dbReference type="RefSeq" id="WP_000681907.1">
    <property type="nucleotide sequence ID" value="NZ_WPGW01000102.1"/>
</dbReference>
<dbReference type="SMR" id="Q83JH9"/>
<dbReference type="STRING" id="198214.SF3167"/>
<dbReference type="PaxDb" id="198214-SF3167"/>
<dbReference type="GeneID" id="1027164"/>
<dbReference type="KEGG" id="sfl:SF3167"/>
<dbReference type="KEGG" id="sfx:S3382"/>
<dbReference type="PATRIC" id="fig|198214.7.peg.3763"/>
<dbReference type="HOGENOM" id="CLU_053334_0_0_6"/>
<dbReference type="UniPathway" id="UPA00704">
    <property type="reaction ID" value="UER00716"/>
</dbReference>
<dbReference type="Proteomes" id="UP000001006">
    <property type="component" value="Chromosome"/>
</dbReference>
<dbReference type="Proteomes" id="UP000002673">
    <property type="component" value="Chromosome"/>
</dbReference>
<dbReference type="GO" id="GO:0005886">
    <property type="term" value="C:plasma membrane"/>
    <property type="evidence" value="ECO:0007669"/>
    <property type="project" value="TreeGrafter"/>
</dbReference>
<dbReference type="GO" id="GO:0005975">
    <property type="term" value="P:carbohydrate metabolic process"/>
    <property type="evidence" value="ECO:0007669"/>
    <property type="project" value="InterPro"/>
</dbReference>
<dbReference type="GO" id="GO:2001059">
    <property type="term" value="P:D-tagatose 6-phosphate catabolic process"/>
    <property type="evidence" value="ECO:0007669"/>
    <property type="project" value="UniProtKB-UniRule"/>
</dbReference>
<dbReference type="GO" id="GO:0009401">
    <property type="term" value="P:phosphoenolpyruvate-dependent sugar phosphotransferase system"/>
    <property type="evidence" value="ECO:0007669"/>
    <property type="project" value="TreeGrafter"/>
</dbReference>
<dbReference type="Gene3D" id="3.20.20.70">
    <property type="entry name" value="Aldolase class I"/>
    <property type="match status" value="1"/>
</dbReference>
<dbReference type="Gene3D" id="1.10.400.20">
    <property type="entry name" value="putative tagatose 6-phosphate kinase domain like"/>
    <property type="match status" value="1"/>
</dbReference>
<dbReference type="HAMAP" id="MF_01295">
    <property type="entry name" value="Tagatose_aldol_KbaZ"/>
    <property type="match status" value="1"/>
</dbReference>
<dbReference type="InterPro" id="IPR013785">
    <property type="entry name" value="Aldolase_TIM"/>
</dbReference>
<dbReference type="InterPro" id="IPR012062">
    <property type="entry name" value="GatZ/KbaZ-like"/>
</dbReference>
<dbReference type="InterPro" id="IPR050303">
    <property type="entry name" value="GatZ_KbaZ_carbometab"/>
</dbReference>
<dbReference type="InterPro" id="IPR023435">
    <property type="entry name" value="TagBP_ald_KbaZ"/>
</dbReference>
<dbReference type="NCBIfam" id="TIGR02810">
    <property type="entry name" value="agaZ_gatZ"/>
    <property type="match status" value="1"/>
</dbReference>
<dbReference type="NCBIfam" id="NF012002">
    <property type="entry name" value="PRK15458.1"/>
    <property type="match status" value="1"/>
</dbReference>
<dbReference type="PANTHER" id="PTHR32502:SF2">
    <property type="entry name" value="D-TAGATOSE-1,6-BISPHOSPHATE ALDOLASE SUBUNIT KBAZ"/>
    <property type="match status" value="1"/>
</dbReference>
<dbReference type="PANTHER" id="PTHR32502">
    <property type="entry name" value="N-ACETYLGALACTOSAMINE PERMEASE II COMPONENT-RELATED"/>
    <property type="match status" value="1"/>
</dbReference>
<dbReference type="Pfam" id="PF08013">
    <property type="entry name" value="GatZ_KbaZ-like"/>
    <property type="match status" value="1"/>
</dbReference>
<dbReference type="PIRSF" id="PIRSF009264">
    <property type="entry name" value="TagBP_ald_AgaZ"/>
    <property type="match status" value="1"/>
</dbReference>
<dbReference type="SUPFAM" id="SSF51569">
    <property type="entry name" value="Aldolase"/>
    <property type="match status" value="1"/>
</dbReference>
<evidence type="ECO:0000255" key="1">
    <source>
        <dbReference type="HAMAP-Rule" id="MF_01295"/>
    </source>
</evidence>
<proteinExistence type="inferred from homology"/>
<sequence>MKHLTEMVRQHKAGKTNAIYAVCSAHPLVLEAAIRYASANQTPLLIEATSNQVDQFGGYTGMTPADFRGFVCQLADSLNFPQDALILGGDHLGPNRWQNLPAAQAMANADDLIKSYVAAGFKKIHLDCSMSCQDDPIPLTDDIVAERAARLAKVAEETCREHFGEADLEYVIGTEVPVPGGAHETLSELAVTTPDAARATLEAHRHAFEKQGLNAIWPRIIALVVQPGVEFDHTNVIDYQPAKASALSQMVENYETLIFEAHSTDYQTPQSLRQLVIDHFAILKVGPALTFALREALFSLAAIEEELVPAKACSGLRQVLENVMLDRPEYWQSHYHGDGNARRLARGYSYSDRVRYYWPDSQIDDAFAHLVRNLADSPIPLPLISQYLPLQYVKVRSGELQPTPRELIINHIQDILAQYHTACEGQ</sequence>
<keyword id="KW-1185">Reference proteome</keyword>
<accession>Q83JH9</accession>
<accession>Q7BZS8</accession>
<name>KBAZ_SHIFL</name>
<reference key="1">
    <citation type="journal article" date="2002" name="Nucleic Acids Res.">
        <title>Genome sequence of Shigella flexneri 2a: insights into pathogenicity through comparison with genomes of Escherichia coli K12 and O157.</title>
        <authorList>
            <person name="Jin Q."/>
            <person name="Yuan Z."/>
            <person name="Xu J."/>
            <person name="Wang Y."/>
            <person name="Shen Y."/>
            <person name="Lu W."/>
            <person name="Wang J."/>
            <person name="Liu H."/>
            <person name="Yang J."/>
            <person name="Yang F."/>
            <person name="Zhang X."/>
            <person name="Zhang J."/>
            <person name="Yang G."/>
            <person name="Wu H."/>
            <person name="Qu D."/>
            <person name="Dong J."/>
            <person name="Sun L."/>
            <person name="Xue Y."/>
            <person name="Zhao A."/>
            <person name="Gao Y."/>
            <person name="Zhu J."/>
            <person name="Kan B."/>
            <person name="Ding K."/>
            <person name="Chen S."/>
            <person name="Cheng H."/>
            <person name="Yao Z."/>
            <person name="He B."/>
            <person name="Chen R."/>
            <person name="Ma D."/>
            <person name="Qiang B."/>
            <person name="Wen Y."/>
            <person name="Hou Y."/>
            <person name="Yu J."/>
        </authorList>
    </citation>
    <scope>NUCLEOTIDE SEQUENCE [LARGE SCALE GENOMIC DNA]</scope>
    <source>
        <strain>301 / Serotype 2a</strain>
    </source>
</reference>
<reference key="2">
    <citation type="journal article" date="2003" name="Infect. Immun.">
        <title>Complete genome sequence and comparative genomics of Shigella flexneri serotype 2a strain 2457T.</title>
        <authorList>
            <person name="Wei J."/>
            <person name="Goldberg M.B."/>
            <person name="Burland V."/>
            <person name="Venkatesan M.M."/>
            <person name="Deng W."/>
            <person name="Fournier G."/>
            <person name="Mayhew G.F."/>
            <person name="Plunkett G. III"/>
            <person name="Rose D.J."/>
            <person name="Darling A."/>
            <person name="Mau B."/>
            <person name="Perna N.T."/>
            <person name="Payne S.M."/>
            <person name="Runyen-Janecky L.J."/>
            <person name="Zhou S."/>
            <person name="Schwartz D.C."/>
            <person name="Blattner F.R."/>
        </authorList>
    </citation>
    <scope>NUCLEOTIDE SEQUENCE [LARGE SCALE GENOMIC DNA]</scope>
    <source>
        <strain>ATCC 700930 / 2457T / Serotype 2a</strain>
    </source>
</reference>
<organism>
    <name type="scientific">Shigella flexneri</name>
    <dbReference type="NCBI Taxonomy" id="623"/>
    <lineage>
        <taxon>Bacteria</taxon>
        <taxon>Pseudomonadati</taxon>
        <taxon>Pseudomonadota</taxon>
        <taxon>Gammaproteobacteria</taxon>
        <taxon>Enterobacterales</taxon>
        <taxon>Enterobacteriaceae</taxon>
        <taxon>Shigella</taxon>
    </lineage>
</organism>
<gene>
    <name evidence="1" type="primary">kbaZ</name>
    <name type="synonym">agaZ</name>
    <name type="ordered locus">SF3167</name>
    <name type="ordered locus">S3382</name>
</gene>
<feature type="chain" id="PRO_0000372545" description="D-tagatose-1,6-bisphosphate aldolase subunit KbaZ">
    <location>
        <begin position="1"/>
        <end position="426"/>
    </location>
</feature>
<comment type="function">
    <text evidence="1">Component of the tagatose-1,6-bisphosphate aldolase KbaYZ that is required for full activity and stability of the Y subunit. Could have a chaperone-like function for the proper and stable folding of KbaY. When expressed alone, KbaZ does not show any aldolase activity.</text>
</comment>
<comment type="pathway">
    <text evidence="1">Carbohydrate metabolism; D-tagatose 6-phosphate degradation; D-glyceraldehyde 3-phosphate and glycerone phosphate from D-tagatose 6-phosphate: step 2/2.</text>
</comment>
<comment type="subunit">
    <text evidence="1">Forms a complex with KbaY.</text>
</comment>
<comment type="similarity">
    <text evidence="1">Belongs to the GatZ/KbaZ family. KbaZ subfamily.</text>
</comment>